<gene>
    <name evidence="1" type="primary">pstB</name>
    <name type="ordered locus">HCH_00753</name>
</gene>
<reference key="1">
    <citation type="journal article" date="2005" name="Nucleic Acids Res.">
        <title>Genomic blueprint of Hahella chejuensis, a marine microbe producing an algicidal agent.</title>
        <authorList>
            <person name="Jeong H."/>
            <person name="Yim J.H."/>
            <person name="Lee C."/>
            <person name="Choi S.-H."/>
            <person name="Park Y.K."/>
            <person name="Yoon S.H."/>
            <person name="Hur C.-G."/>
            <person name="Kang H.-Y."/>
            <person name="Kim D."/>
            <person name="Lee H.H."/>
            <person name="Park K.H."/>
            <person name="Park S.-H."/>
            <person name="Park H.-S."/>
            <person name="Lee H.K."/>
            <person name="Oh T.K."/>
            <person name="Kim J.F."/>
        </authorList>
    </citation>
    <scope>NUCLEOTIDE SEQUENCE [LARGE SCALE GENOMIC DNA]</scope>
    <source>
        <strain>KCTC 2396</strain>
    </source>
</reference>
<organism>
    <name type="scientific">Hahella chejuensis (strain KCTC 2396)</name>
    <dbReference type="NCBI Taxonomy" id="349521"/>
    <lineage>
        <taxon>Bacteria</taxon>
        <taxon>Pseudomonadati</taxon>
        <taxon>Pseudomonadota</taxon>
        <taxon>Gammaproteobacteria</taxon>
        <taxon>Oceanospirillales</taxon>
        <taxon>Hahellaceae</taxon>
        <taxon>Hahella</taxon>
    </lineage>
</organism>
<accession>Q2SNX4</accession>
<protein>
    <recommendedName>
        <fullName evidence="1">Phosphate import ATP-binding protein PstB</fullName>
        <ecNumber evidence="1">7.3.2.1</ecNumber>
    </recommendedName>
    <alternativeName>
        <fullName evidence="1">ABC phosphate transporter</fullName>
    </alternativeName>
    <alternativeName>
        <fullName evidence="1">Phosphate-transporting ATPase</fullName>
    </alternativeName>
</protein>
<sequence length="294" mass="33200">MSETMTNQNVVNEEQPFNESKHRSHGIDISAIERSMEDLSIDNETIALEVNKLKLFYGEKEALHGIDLSIPQKRVTAFIGPSGCGKSTLLRCFNRMNDLVDGCRIDGQILLEQEDIYRKGVDVAELRRRVGMVFQKPNPFPKTIYENVAYGLRIQGINKKRILDETVEWALKSAALWDEVKDRLNDSALGLSGGQQQRLVIARTVAVKPEVLLLDEPASALDPLSTLKIEELIHELKNDYTIVIVTHNMQQAARVSDYTAFMYMGDLIEFGSTNQLFTNPSCKQTEDYITGRYG</sequence>
<comment type="function">
    <text evidence="1">Part of the ABC transporter complex PstSACB involved in phosphate import. Responsible for energy coupling to the transport system.</text>
</comment>
<comment type="catalytic activity">
    <reaction evidence="1">
        <text>phosphate(out) + ATP + H2O = ADP + 2 phosphate(in) + H(+)</text>
        <dbReference type="Rhea" id="RHEA:24440"/>
        <dbReference type="ChEBI" id="CHEBI:15377"/>
        <dbReference type="ChEBI" id="CHEBI:15378"/>
        <dbReference type="ChEBI" id="CHEBI:30616"/>
        <dbReference type="ChEBI" id="CHEBI:43474"/>
        <dbReference type="ChEBI" id="CHEBI:456216"/>
        <dbReference type="EC" id="7.3.2.1"/>
    </reaction>
</comment>
<comment type="subunit">
    <text evidence="1">The complex is composed of two ATP-binding proteins (PstB), two transmembrane proteins (PstC and PstA) and a solute-binding protein (PstS).</text>
</comment>
<comment type="subcellular location">
    <subcellularLocation>
        <location evidence="1">Cell inner membrane</location>
        <topology evidence="1">Peripheral membrane protein</topology>
    </subcellularLocation>
</comment>
<comment type="similarity">
    <text evidence="1">Belongs to the ABC transporter superfamily. Phosphate importer (TC 3.A.1.7) family.</text>
</comment>
<feature type="chain" id="PRO_0000272460" description="Phosphate import ATP-binding protein PstB">
    <location>
        <begin position="1"/>
        <end position="294"/>
    </location>
</feature>
<feature type="domain" description="ABC transporter" evidence="1">
    <location>
        <begin position="48"/>
        <end position="289"/>
    </location>
</feature>
<feature type="region of interest" description="Disordered" evidence="2">
    <location>
        <begin position="1"/>
        <end position="24"/>
    </location>
</feature>
<feature type="compositionally biased region" description="Polar residues" evidence="2">
    <location>
        <begin position="1"/>
        <end position="18"/>
    </location>
</feature>
<feature type="binding site" evidence="1">
    <location>
        <begin position="80"/>
        <end position="87"/>
    </location>
    <ligand>
        <name>ATP</name>
        <dbReference type="ChEBI" id="CHEBI:30616"/>
    </ligand>
</feature>
<proteinExistence type="inferred from homology"/>
<dbReference type="EC" id="7.3.2.1" evidence="1"/>
<dbReference type="EMBL" id="CP000155">
    <property type="protein sequence ID" value="ABC27650.1"/>
    <property type="molecule type" value="Genomic_DNA"/>
</dbReference>
<dbReference type="RefSeq" id="WP_011394727.1">
    <property type="nucleotide sequence ID" value="NC_007645.1"/>
</dbReference>
<dbReference type="SMR" id="Q2SNX4"/>
<dbReference type="STRING" id="349521.HCH_00753"/>
<dbReference type="KEGG" id="hch:HCH_00753"/>
<dbReference type="eggNOG" id="COG1117">
    <property type="taxonomic scope" value="Bacteria"/>
</dbReference>
<dbReference type="HOGENOM" id="CLU_000604_1_22_6"/>
<dbReference type="Proteomes" id="UP000000238">
    <property type="component" value="Chromosome"/>
</dbReference>
<dbReference type="GO" id="GO:0005886">
    <property type="term" value="C:plasma membrane"/>
    <property type="evidence" value="ECO:0007669"/>
    <property type="project" value="UniProtKB-SubCell"/>
</dbReference>
<dbReference type="GO" id="GO:0005524">
    <property type="term" value="F:ATP binding"/>
    <property type="evidence" value="ECO:0007669"/>
    <property type="project" value="UniProtKB-KW"/>
</dbReference>
<dbReference type="GO" id="GO:0016887">
    <property type="term" value="F:ATP hydrolysis activity"/>
    <property type="evidence" value="ECO:0007669"/>
    <property type="project" value="InterPro"/>
</dbReference>
<dbReference type="GO" id="GO:0015415">
    <property type="term" value="F:ATPase-coupled phosphate ion transmembrane transporter activity"/>
    <property type="evidence" value="ECO:0007669"/>
    <property type="project" value="UniProtKB-EC"/>
</dbReference>
<dbReference type="GO" id="GO:0035435">
    <property type="term" value="P:phosphate ion transmembrane transport"/>
    <property type="evidence" value="ECO:0007669"/>
    <property type="project" value="InterPro"/>
</dbReference>
<dbReference type="CDD" id="cd03260">
    <property type="entry name" value="ABC_PstB_phosphate_transporter"/>
    <property type="match status" value="1"/>
</dbReference>
<dbReference type="FunFam" id="3.40.50.300:FF:000132">
    <property type="entry name" value="Phosphate import ATP-binding protein PstB"/>
    <property type="match status" value="1"/>
</dbReference>
<dbReference type="Gene3D" id="3.40.50.300">
    <property type="entry name" value="P-loop containing nucleotide triphosphate hydrolases"/>
    <property type="match status" value="1"/>
</dbReference>
<dbReference type="InterPro" id="IPR003593">
    <property type="entry name" value="AAA+_ATPase"/>
</dbReference>
<dbReference type="InterPro" id="IPR003439">
    <property type="entry name" value="ABC_transporter-like_ATP-bd"/>
</dbReference>
<dbReference type="InterPro" id="IPR017871">
    <property type="entry name" value="ABC_transporter-like_CS"/>
</dbReference>
<dbReference type="InterPro" id="IPR027417">
    <property type="entry name" value="P-loop_NTPase"/>
</dbReference>
<dbReference type="InterPro" id="IPR005670">
    <property type="entry name" value="PstB-like"/>
</dbReference>
<dbReference type="NCBIfam" id="TIGR00972">
    <property type="entry name" value="3a0107s01c2"/>
    <property type="match status" value="1"/>
</dbReference>
<dbReference type="PANTHER" id="PTHR43423">
    <property type="entry name" value="ABC TRANSPORTER I FAMILY MEMBER 17"/>
    <property type="match status" value="1"/>
</dbReference>
<dbReference type="PANTHER" id="PTHR43423:SF12">
    <property type="entry name" value="IRON EXPORT ATP-BINDING PROTEIN FETA-RELATED"/>
    <property type="match status" value="1"/>
</dbReference>
<dbReference type="Pfam" id="PF00005">
    <property type="entry name" value="ABC_tran"/>
    <property type="match status" value="1"/>
</dbReference>
<dbReference type="SMART" id="SM00382">
    <property type="entry name" value="AAA"/>
    <property type="match status" value="1"/>
</dbReference>
<dbReference type="SUPFAM" id="SSF52540">
    <property type="entry name" value="P-loop containing nucleoside triphosphate hydrolases"/>
    <property type="match status" value="1"/>
</dbReference>
<dbReference type="PROSITE" id="PS00211">
    <property type="entry name" value="ABC_TRANSPORTER_1"/>
    <property type="match status" value="1"/>
</dbReference>
<dbReference type="PROSITE" id="PS50893">
    <property type="entry name" value="ABC_TRANSPORTER_2"/>
    <property type="match status" value="1"/>
</dbReference>
<dbReference type="PROSITE" id="PS51238">
    <property type="entry name" value="PSTB"/>
    <property type="match status" value="1"/>
</dbReference>
<evidence type="ECO:0000255" key="1">
    <source>
        <dbReference type="HAMAP-Rule" id="MF_01702"/>
    </source>
</evidence>
<evidence type="ECO:0000256" key="2">
    <source>
        <dbReference type="SAM" id="MobiDB-lite"/>
    </source>
</evidence>
<keyword id="KW-0067">ATP-binding</keyword>
<keyword id="KW-0997">Cell inner membrane</keyword>
<keyword id="KW-1003">Cell membrane</keyword>
<keyword id="KW-0472">Membrane</keyword>
<keyword id="KW-0547">Nucleotide-binding</keyword>
<keyword id="KW-0592">Phosphate transport</keyword>
<keyword id="KW-1185">Reference proteome</keyword>
<keyword id="KW-1278">Translocase</keyword>
<keyword id="KW-0813">Transport</keyword>
<name>PSTB_HAHCH</name>